<gene>
    <name type="ordered locus">BLi04092</name>
    <name type="ordered locus">BL05369</name>
</gene>
<dbReference type="EC" id="3.2.2.-" evidence="1"/>
<dbReference type="EMBL" id="AE017333">
    <property type="protein sequence ID" value="AAU42905.1"/>
    <property type="molecule type" value="Genomic_DNA"/>
</dbReference>
<dbReference type="EMBL" id="CP000002">
    <property type="protein sequence ID" value="AAU25532.1"/>
    <property type="molecule type" value="Genomic_DNA"/>
</dbReference>
<dbReference type="RefSeq" id="WP_003186302.1">
    <property type="nucleotide sequence ID" value="NC_006322.1"/>
</dbReference>
<dbReference type="SMR" id="Q65DF9"/>
<dbReference type="STRING" id="279010.BL05369"/>
<dbReference type="KEGG" id="bld:BLi04092"/>
<dbReference type="KEGG" id="bli:BL05369"/>
<dbReference type="eggNOG" id="COG2094">
    <property type="taxonomic scope" value="Bacteria"/>
</dbReference>
<dbReference type="HOGENOM" id="CLU_060471_2_0_9"/>
<dbReference type="Proteomes" id="UP000000606">
    <property type="component" value="Chromosome"/>
</dbReference>
<dbReference type="GO" id="GO:0003905">
    <property type="term" value="F:alkylbase DNA N-glycosylase activity"/>
    <property type="evidence" value="ECO:0007669"/>
    <property type="project" value="InterPro"/>
</dbReference>
<dbReference type="GO" id="GO:0003677">
    <property type="term" value="F:DNA binding"/>
    <property type="evidence" value="ECO:0007669"/>
    <property type="project" value="InterPro"/>
</dbReference>
<dbReference type="GO" id="GO:0006284">
    <property type="term" value="P:base-excision repair"/>
    <property type="evidence" value="ECO:0007669"/>
    <property type="project" value="InterPro"/>
</dbReference>
<dbReference type="CDD" id="cd00540">
    <property type="entry name" value="AAG"/>
    <property type="match status" value="1"/>
</dbReference>
<dbReference type="FunFam" id="3.10.300.10:FF:000001">
    <property type="entry name" value="Putative 3-methyladenine DNA glycosylase"/>
    <property type="match status" value="1"/>
</dbReference>
<dbReference type="Gene3D" id="3.10.300.10">
    <property type="entry name" value="Methylpurine-DNA glycosylase (MPG)"/>
    <property type="match status" value="1"/>
</dbReference>
<dbReference type="HAMAP" id="MF_00527">
    <property type="entry name" value="3MGH"/>
    <property type="match status" value="1"/>
</dbReference>
<dbReference type="InterPro" id="IPR011034">
    <property type="entry name" value="Formyl_transferase-like_C_sf"/>
</dbReference>
<dbReference type="InterPro" id="IPR003180">
    <property type="entry name" value="MPG"/>
</dbReference>
<dbReference type="InterPro" id="IPR036995">
    <property type="entry name" value="MPG_sf"/>
</dbReference>
<dbReference type="NCBIfam" id="TIGR00567">
    <property type="entry name" value="3mg"/>
    <property type="match status" value="1"/>
</dbReference>
<dbReference type="NCBIfam" id="NF002002">
    <property type="entry name" value="PRK00802.1-2"/>
    <property type="match status" value="1"/>
</dbReference>
<dbReference type="PANTHER" id="PTHR10429">
    <property type="entry name" value="DNA-3-METHYLADENINE GLYCOSYLASE"/>
    <property type="match status" value="1"/>
</dbReference>
<dbReference type="PANTHER" id="PTHR10429:SF0">
    <property type="entry name" value="DNA-3-METHYLADENINE GLYCOSYLASE"/>
    <property type="match status" value="1"/>
</dbReference>
<dbReference type="Pfam" id="PF02245">
    <property type="entry name" value="Pur_DNA_glyco"/>
    <property type="match status" value="1"/>
</dbReference>
<dbReference type="SUPFAM" id="SSF50486">
    <property type="entry name" value="FMT C-terminal domain-like"/>
    <property type="match status" value="1"/>
</dbReference>
<reference key="1">
    <citation type="journal article" date="2004" name="J. Mol. Microbiol. Biotechnol.">
        <title>The complete genome sequence of Bacillus licheniformis DSM13, an organism with great industrial potential.</title>
        <authorList>
            <person name="Veith B."/>
            <person name="Herzberg C."/>
            <person name="Steckel S."/>
            <person name="Feesche J."/>
            <person name="Maurer K.H."/>
            <person name="Ehrenreich P."/>
            <person name="Baeumer S."/>
            <person name="Henne A."/>
            <person name="Liesegang H."/>
            <person name="Merkl R."/>
            <person name="Ehrenreich A."/>
            <person name="Gottschalk G."/>
        </authorList>
    </citation>
    <scope>NUCLEOTIDE SEQUENCE [LARGE SCALE GENOMIC DNA]</scope>
    <source>
        <strain>ATCC 14580 / DSM 13 / JCM 2505 / CCUG 7422 / NBRC 12200 / NCIMB 9375 / NCTC 10341 / NRRL NRS-1264 / Gibson 46</strain>
    </source>
</reference>
<reference key="2">
    <citation type="journal article" date="2004" name="Genome Biol.">
        <title>Complete genome sequence of the industrial bacterium Bacillus licheniformis and comparisons with closely related Bacillus species.</title>
        <authorList>
            <person name="Rey M.W."/>
            <person name="Ramaiya P."/>
            <person name="Nelson B.A."/>
            <person name="Brody-Karpin S.D."/>
            <person name="Zaretsky E.J."/>
            <person name="Tang M."/>
            <person name="Lopez de Leon A."/>
            <person name="Xiang H."/>
            <person name="Gusti V."/>
            <person name="Clausen I.G."/>
            <person name="Olsen P.B."/>
            <person name="Rasmussen M.D."/>
            <person name="Andersen J.T."/>
            <person name="Joergensen P.L."/>
            <person name="Larsen T.S."/>
            <person name="Sorokin A."/>
            <person name="Bolotin A."/>
            <person name="Lapidus A."/>
            <person name="Galleron N."/>
            <person name="Ehrlich S.D."/>
            <person name="Berka R.M."/>
        </authorList>
    </citation>
    <scope>NUCLEOTIDE SEQUENCE [LARGE SCALE GENOMIC DNA]</scope>
    <source>
        <strain>ATCC 14580 / DSM 13 / JCM 2505 / CCUG 7422 / NBRC 12200 / NCIMB 9375 / NCTC 10341 / NRRL NRS-1264 / Gibson 46</strain>
    </source>
</reference>
<proteinExistence type="inferred from homology"/>
<name>3MGH_BACLD</name>
<evidence type="ECO:0000255" key="1">
    <source>
        <dbReference type="HAMAP-Rule" id="MF_00527"/>
    </source>
</evidence>
<comment type="similarity">
    <text evidence="1">Belongs to the DNA glycosylase MPG family.</text>
</comment>
<organism>
    <name type="scientific">Bacillus licheniformis (strain ATCC 14580 / DSM 13 / JCM 2505 / CCUG 7422 / NBRC 12200 / NCIMB 9375 / NCTC 10341 / NRRL NRS-1264 / Gibson 46)</name>
    <dbReference type="NCBI Taxonomy" id="279010"/>
    <lineage>
        <taxon>Bacteria</taxon>
        <taxon>Bacillati</taxon>
        <taxon>Bacillota</taxon>
        <taxon>Bacilli</taxon>
        <taxon>Bacillales</taxon>
        <taxon>Bacillaceae</taxon>
        <taxon>Bacillus</taxon>
    </lineage>
</organism>
<protein>
    <recommendedName>
        <fullName evidence="1">Putative 3-methyladenine DNA glycosylase</fullName>
        <ecNumber evidence="1">3.2.2.-</ecNumber>
    </recommendedName>
</protein>
<sequence>MNPAHEPLPLEFYNKPTIELARSLLGCLLVKETEEGPASGYIVETEAYKGPGDRAAHSYGNRRTKRTEIMYREAGVVYTYTMHTHTLINVVSGGADEPEAVLIRALEPHEGLALMEKRRSGKKPRDWTNGPGKLTKALSITMNDYGRPLTGPPLYIAKGYEPQDILSGPRIGIDNSGEAREYPWRFWIKGNRYVSR</sequence>
<accession>Q65DF9</accession>
<accession>Q62NX9</accession>
<feature type="chain" id="PRO_0000264997" description="Putative 3-methyladenine DNA glycosylase">
    <location>
        <begin position="1"/>
        <end position="196"/>
    </location>
</feature>
<keyword id="KW-0227">DNA damage</keyword>
<keyword id="KW-0234">DNA repair</keyword>
<keyword id="KW-0378">Hydrolase</keyword>
<keyword id="KW-1185">Reference proteome</keyword>